<dbReference type="EC" id="2.6.99.2" evidence="1"/>
<dbReference type="EMBL" id="CP000090">
    <property type="protein sequence ID" value="AAZ61612.1"/>
    <property type="molecule type" value="Genomic_DNA"/>
</dbReference>
<dbReference type="SMR" id="Q46Z21"/>
<dbReference type="STRING" id="264198.Reut_A2249"/>
<dbReference type="KEGG" id="reu:Reut_A2249"/>
<dbReference type="eggNOG" id="COG0854">
    <property type="taxonomic scope" value="Bacteria"/>
</dbReference>
<dbReference type="HOGENOM" id="CLU_074563_0_0_4"/>
<dbReference type="OrthoDB" id="9806590at2"/>
<dbReference type="UniPathway" id="UPA00244">
    <property type="reaction ID" value="UER00313"/>
</dbReference>
<dbReference type="GO" id="GO:0005829">
    <property type="term" value="C:cytosol"/>
    <property type="evidence" value="ECO:0007669"/>
    <property type="project" value="TreeGrafter"/>
</dbReference>
<dbReference type="GO" id="GO:0033856">
    <property type="term" value="F:pyridoxine 5'-phosphate synthase activity"/>
    <property type="evidence" value="ECO:0007669"/>
    <property type="project" value="UniProtKB-EC"/>
</dbReference>
<dbReference type="GO" id="GO:0008615">
    <property type="term" value="P:pyridoxine biosynthetic process"/>
    <property type="evidence" value="ECO:0007669"/>
    <property type="project" value="UniProtKB-UniRule"/>
</dbReference>
<dbReference type="CDD" id="cd00003">
    <property type="entry name" value="PNPsynthase"/>
    <property type="match status" value="1"/>
</dbReference>
<dbReference type="FunFam" id="3.20.20.70:FF:000042">
    <property type="entry name" value="Pyridoxine 5'-phosphate synthase"/>
    <property type="match status" value="1"/>
</dbReference>
<dbReference type="Gene3D" id="3.20.20.70">
    <property type="entry name" value="Aldolase class I"/>
    <property type="match status" value="1"/>
</dbReference>
<dbReference type="HAMAP" id="MF_00279">
    <property type="entry name" value="PdxJ"/>
    <property type="match status" value="1"/>
</dbReference>
<dbReference type="InterPro" id="IPR013785">
    <property type="entry name" value="Aldolase_TIM"/>
</dbReference>
<dbReference type="InterPro" id="IPR004569">
    <property type="entry name" value="PyrdxlP_synth_PdxJ"/>
</dbReference>
<dbReference type="InterPro" id="IPR036130">
    <property type="entry name" value="Pyridoxine-5'_phos_synth"/>
</dbReference>
<dbReference type="NCBIfam" id="TIGR00559">
    <property type="entry name" value="pdxJ"/>
    <property type="match status" value="1"/>
</dbReference>
<dbReference type="NCBIfam" id="NF003623">
    <property type="entry name" value="PRK05265.1-1"/>
    <property type="match status" value="1"/>
</dbReference>
<dbReference type="NCBIfam" id="NF003625">
    <property type="entry name" value="PRK05265.1-3"/>
    <property type="match status" value="1"/>
</dbReference>
<dbReference type="NCBIfam" id="NF003627">
    <property type="entry name" value="PRK05265.1-5"/>
    <property type="match status" value="1"/>
</dbReference>
<dbReference type="PANTHER" id="PTHR30456">
    <property type="entry name" value="PYRIDOXINE 5'-PHOSPHATE SYNTHASE"/>
    <property type="match status" value="1"/>
</dbReference>
<dbReference type="PANTHER" id="PTHR30456:SF0">
    <property type="entry name" value="PYRIDOXINE 5'-PHOSPHATE SYNTHASE"/>
    <property type="match status" value="1"/>
</dbReference>
<dbReference type="Pfam" id="PF03740">
    <property type="entry name" value="PdxJ"/>
    <property type="match status" value="1"/>
</dbReference>
<dbReference type="SUPFAM" id="SSF63892">
    <property type="entry name" value="Pyridoxine 5'-phosphate synthase"/>
    <property type="match status" value="1"/>
</dbReference>
<proteinExistence type="inferred from homology"/>
<organism>
    <name type="scientific">Cupriavidus pinatubonensis (strain JMP 134 / LMG 1197)</name>
    <name type="common">Cupriavidus necator (strain JMP 134)</name>
    <dbReference type="NCBI Taxonomy" id="264198"/>
    <lineage>
        <taxon>Bacteria</taxon>
        <taxon>Pseudomonadati</taxon>
        <taxon>Pseudomonadota</taxon>
        <taxon>Betaproteobacteria</taxon>
        <taxon>Burkholderiales</taxon>
        <taxon>Burkholderiaceae</taxon>
        <taxon>Cupriavidus</taxon>
    </lineage>
</organism>
<name>PDXJ_CUPPJ</name>
<keyword id="KW-0963">Cytoplasm</keyword>
<keyword id="KW-0664">Pyridoxine biosynthesis</keyword>
<keyword id="KW-0808">Transferase</keyword>
<evidence type="ECO:0000255" key="1">
    <source>
        <dbReference type="HAMAP-Rule" id="MF_00279"/>
    </source>
</evidence>
<sequence>MIFHANPGVIDLGINIDHVATLRNARGTVYPDPIEAALQAEEAGADLITLHLREDRRHIRDADVRALRPQLATRMNLECAITQEMLDIACEIRPQDVCLVPERREEVTTEGGLDVAGRFGQVSSACKQLAAAGIRVSLFIDADADQIAAAAACGAPVIELHTGRYADAHTPDELAIEFRRVADGVDAGIRHGLVVNAGHGLHYTNVQPIAALAGIKELNIGHAVVAHAVFVGWQNAVREMKAIMVAARLGTRYPAAGKPA</sequence>
<gene>
    <name evidence="1" type="primary">pdxJ</name>
    <name type="ordered locus">Reut_A2249</name>
</gene>
<reference key="1">
    <citation type="journal article" date="2010" name="PLoS ONE">
        <title>The complete multipartite genome sequence of Cupriavidus necator JMP134, a versatile pollutant degrader.</title>
        <authorList>
            <person name="Lykidis A."/>
            <person name="Perez-Pantoja D."/>
            <person name="Ledger T."/>
            <person name="Mavromatis K."/>
            <person name="Anderson I.J."/>
            <person name="Ivanova N.N."/>
            <person name="Hooper S.D."/>
            <person name="Lapidus A."/>
            <person name="Lucas S."/>
            <person name="Gonzalez B."/>
            <person name="Kyrpides N.C."/>
        </authorList>
    </citation>
    <scope>NUCLEOTIDE SEQUENCE [LARGE SCALE GENOMIC DNA]</scope>
    <source>
        <strain>JMP134 / LMG 1197</strain>
    </source>
</reference>
<feature type="chain" id="PRO_0000231839" description="Pyridoxine 5'-phosphate synthase">
    <location>
        <begin position="1"/>
        <end position="260"/>
    </location>
</feature>
<feature type="active site" description="Proton acceptor" evidence="1">
    <location>
        <position position="51"/>
    </location>
</feature>
<feature type="active site" description="Proton acceptor" evidence="1">
    <location>
        <position position="78"/>
    </location>
</feature>
<feature type="active site" description="Proton donor" evidence="1">
    <location>
        <position position="199"/>
    </location>
</feature>
<feature type="binding site" evidence="1">
    <location>
        <position position="15"/>
    </location>
    <ligand>
        <name>3-amino-2-oxopropyl phosphate</name>
        <dbReference type="ChEBI" id="CHEBI:57279"/>
    </ligand>
</feature>
<feature type="binding site" evidence="1">
    <location>
        <begin position="17"/>
        <end position="18"/>
    </location>
    <ligand>
        <name>1-deoxy-D-xylulose 5-phosphate</name>
        <dbReference type="ChEBI" id="CHEBI:57792"/>
    </ligand>
</feature>
<feature type="binding site" evidence="1">
    <location>
        <position position="26"/>
    </location>
    <ligand>
        <name>3-amino-2-oxopropyl phosphate</name>
        <dbReference type="ChEBI" id="CHEBI:57279"/>
    </ligand>
</feature>
<feature type="binding site" evidence="1">
    <location>
        <position position="53"/>
    </location>
    <ligand>
        <name>1-deoxy-D-xylulose 5-phosphate</name>
        <dbReference type="ChEBI" id="CHEBI:57792"/>
    </ligand>
</feature>
<feature type="binding site" evidence="1">
    <location>
        <position position="58"/>
    </location>
    <ligand>
        <name>1-deoxy-D-xylulose 5-phosphate</name>
        <dbReference type="ChEBI" id="CHEBI:57792"/>
    </ligand>
</feature>
<feature type="binding site" evidence="1">
    <location>
        <position position="108"/>
    </location>
    <ligand>
        <name>1-deoxy-D-xylulose 5-phosphate</name>
        <dbReference type="ChEBI" id="CHEBI:57792"/>
    </ligand>
</feature>
<feature type="binding site" evidence="1">
    <location>
        <position position="200"/>
    </location>
    <ligand>
        <name>3-amino-2-oxopropyl phosphate</name>
        <dbReference type="ChEBI" id="CHEBI:57279"/>
    </ligand>
</feature>
<feature type="binding site" evidence="1">
    <location>
        <begin position="221"/>
        <end position="222"/>
    </location>
    <ligand>
        <name>3-amino-2-oxopropyl phosphate</name>
        <dbReference type="ChEBI" id="CHEBI:57279"/>
    </ligand>
</feature>
<feature type="site" description="Transition state stabilizer" evidence="1">
    <location>
        <position position="159"/>
    </location>
</feature>
<comment type="function">
    <text evidence="1">Catalyzes the complicated ring closure reaction between the two acyclic compounds 1-deoxy-D-xylulose-5-phosphate (DXP) and 3-amino-2-oxopropyl phosphate (1-amino-acetone-3-phosphate or AAP) to form pyridoxine 5'-phosphate (PNP) and inorganic phosphate.</text>
</comment>
<comment type="catalytic activity">
    <reaction evidence="1">
        <text>3-amino-2-oxopropyl phosphate + 1-deoxy-D-xylulose 5-phosphate = pyridoxine 5'-phosphate + phosphate + 2 H2O + H(+)</text>
        <dbReference type="Rhea" id="RHEA:15265"/>
        <dbReference type="ChEBI" id="CHEBI:15377"/>
        <dbReference type="ChEBI" id="CHEBI:15378"/>
        <dbReference type="ChEBI" id="CHEBI:43474"/>
        <dbReference type="ChEBI" id="CHEBI:57279"/>
        <dbReference type="ChEBI" id="CHEBI:57792"/>
        <dbReference type="ChEBI" id="CHEBI:58589"/>
        <dbReference type="EC" id="2.6.99.2"/>
    </reaction>
</comment>
<comment type="pathway">
    <text evidence="1">Cofactor biosynthesis; pyridoxine 5'-phosphate biosynthesis; pyridoxine 5'-phosphate from D-erythrose 4-phosphate: step 5/5.</text>
</comment>
<comment type="subunit">
    <text evidence="1">Homooctamer; tetramer of dimers.</text>
</comment>
<comment type="subcellular location">
    <subcellularLocation>
        <location evidence="1">Cytoplasm</location>
    </subcellularLocation>
</comment>
<comment type="similarity">
    <text evidence="1">Belongs to the PNP synthase family.</text>
</comment>
<accession>Q46Z21</accession>
<protein>
    <recommendedName>
        <fullName evidence="1">Pyridoxine 5'-phosphate synthase</fullName>
        <shortName evidence="1">PNP synthase</shortName>
        <ecNumber evidence="1">2.6.99.2</ecNumber>
    </recommendedName>
</protein>